<protein>
    <recommendedName>
        <fullName evidence="1">Fluoride-specific ion channel FluC</fullName>
    </recommendedName>
</protein>
<reference key="1">
    <citation type="journal article" date="2003" name="Proc. Natl. Acad. Sci. U.S.A.">
        <title>The complete genome sequence of the Arabidopsis and tomato pathogen Pseudomonas syringae pv. tomato DC3000.</title>
        <authorList>
            <person name="Buell C.R."/>
            <person name="Joardar V."/>
            <person name="Lindeberg M."/>
            <person name="Selengut J."/>
            <person name="Paulsen I.T."/>
            <person name="Gwinn M.L."/>
            <person name="Dodson R.J."/>
            <person name="DeBoy R.T."/>
            <person name="Durkin A.S."/>
            <person name="Kolonay J.F."/>
            <person name="Madupu R."/>
            <person name="Daugherty S.C."/>
            <person name="Brinkac L.M."/>
            <person name="Beanan M.J."/>
            <person name="Haft D.H."/>
            <person name="Nelson W.C."/>
            <person name="Davidsen T.M."/>
            <person name="Zafar N."/>
            <person name="Zhou L."/>
            <person name="Liu J."/>
            <person name="Yuan Q."/>
            <person name="Khouri H.M."/>
            <person name="Fedorova N.B."/>
            <person name="Tran B."/>
            <person name="Russell D."/>
            <person name="Berry K.J."/>
            <person name="Utterback T.R."/>
            <person name="Van Aken S.E."/>
            <person name="Feldblyum T.V."/>
            <person name="D'Ascenzo M."/>
            <person name="Deng W.-L."/>
            <person name="Ramos A.R."/>
            <person name="Alfano J.R."/>
            <person name="Cartinhour S."/>
            <person name="Chatterjee A.K."/>
            <person name="Delaney T.P."/>
            <person name="Lazarowitz S.G."/>
            <person name="Martin G.B."/>
            <person name="Schneider D.J."/>
            <person name="Tang X."/>
            <person name="Bender C.L."/>
            <person name="White O."/>
            <person name="Fraser C.M."/>
            <person name="Collmer A."/>
        </authorList>
    </citation>
    <scope>NUCLEOTIDE SEQUENCE [LARGE SCALE GENOMIC DNA]</scope>
    <source>
        <strain>ATCC BAA-871 / DC3000</strain>
    </source>
</reference>
<name>FLUC_PSESM</name>
<organism>
    <name type="scientific">Pseudomonas syringae pv. tomato (strain ATCC BAA-871 / DC3000)</name>
    <dbReference type="NCBI Taxonomy" id="223283"/>
    <lineage>
        <taxon>Bacteria</taxon>
        <taxon>Pseudomonadati</taxon>
        <taxon>Pseudomonadota</taxon>
        <taxon>Gammaproteobacteria</taxon>
        <taxon>Pseudomonadales</taxon>
        <taxon>Pseudomonadaceae</taxon>
        <taxon>Pseudomonas</taxon>
    </lineage>
</organism>
<keyword id="KW-0997">Cell inner membrane</keyword>
<keyword id="KW-1003">Cell membrane</keyword>
<keyword id="KW-0407">Ion channel</keyword>
<keyword id="KW-0406">Ion transport</keyword>
<keyword id="KW-0472">Membrane</keyword>
<keyword id="KW-0479">Metal-binding</keyword>
<keyword id="KW-1185">Reference proteome</keyword>
<keyword id="KW-0915">Sodium</keyword>
<keyword id="KW-0812">Transmembrane</keyword>
<keyword id="KW-1133">Transmembrane helix</keyword>
<keyword id="KW-0813">Transport</keyword>
<comment type="function">
    <text evidence="1">Fluoride-specific ion channel. Important for reducing fluoride concentration in the cell, thus reducing its toxicity.</text>
</comment>
<comment type="catalytic activity">
    <reaction evidence="1">
        <text>fluoride(in) = fluoride(out)</text>
        <dbReference type="Rhea" id="RHEA:76159"/>
        <dbReference type="ChEBI" id="CHEBI:17051"/>
    </reaction>
    <physiologicalReaction direction="left-to-right" evidence="1">
        <dbReference type="Rhea" id="RHEA:76160"/>
    </physiologicalReaction>
</comment>
<comment type="activity regulation">
    <text evidence="1">Na(+) is not transported, but it plays an essential structural role and its presence is essential for fluoride channel function.</text>
</comment>
<comment type="subcellular location">
    <subcellularLocation>
        <location evidence="1">Cell inner membrane</location>
        <topology evidence="1">Multi-pass membrane protein</topology>
    </subcellularLocation>
</comment>
<comment type="similarity">
    <text evidence="1">Belongs to the fluoride channel Fluc/FEX (TC 1.A.43) family.</text>
</comment>
<accession>Q87ZS8</accession>
<gene>
    <name evidence="1" type="primary">fluC</name>
    <name evidence="1" type="synonym">crcB</name>
    <name type="ordered locus">PSPTO_3346</name>
</gene>
<evidence type="ECO:0000255" key="1">
    <source>
        <dbReference type="HAMAP-Rule" id="MF_00454"/>
    </source>
</evidence>
<proteinExistence type="inferred from homology"/>
<dbReference type="EMBL" id="AE016853">
    <property type="protein sequence ID" value="AAO56824.1"/>
    <property type="molecule type" value="Genomic_DNA"/>
</dbReference>
<dbReference type="RefSeq" id="NP_793129.1">
    <property type="nucleotide sequence ID" value="NC_004578.1"/>
</dbReference>
<dbReference type="RefSeq" id="WP_011104506.1">
    <property type="nucleotide sequence ID" value="NC_004578.1"/>
</dbReference>
<dbReference type="SMR" id="Q87ZS8"/>
<dbReference type="STRING" id="223283.PSPTO_3346"/>
<dbReference type="GeneID" id="1185005"/>
<dbReference type="KEGG" id="pst:PSPTO_3346"/>
<dbReference type="PATRIC" id="fig|223283.9.peg.3425"/>
<dbReference type="eggNOG" id="COG0239">
    <property type="taxonomic scope" value="Bacteria"/>
</dbReference>
<dbReference type="HOGENOM" id="CLU_114342_2_3_6"/>
<dbReference type="OrthoDB" id="9806299at2"/>
<dbReference type="PhylomeDB" id="Q87ZS8"/>
<dbReference type="Proteomes" id="UP000002515">
    <property type="component" value="Chromosome"/>
</dbReference>
<dbReference type="GO" id="GO:0005886">
    <property type="term" value="C:plasma membrane"/>
    <property type="evidence" value="ECO:0007669"/>
    <property type="project" value="UniProtKB-SubCell"/>
</dbReference>
<dbReference type="GO" id="GO:0062054">
    <property type="term" value="F:fluoride channel activity"/>
    <property type="evidence" value="ECO:0007669"/>
    <property type="project" value="UniProtKB-UniRule"/>
</dbReference>
<dbReference type="GO" id="GO:0046872">
    <property type="term" value="F:metal ion binding"/>
    <property type="evidence" value="ECO:0007669"/>
    <property type="project" value="UniProtKB-KW"/>
</dbReference>
<dbReference type="GO" id="GO:0140114">
    <property type="term" value="P:cellular detoxification of fluoride"/>
    <property type="evidence" value="ECO:0007669"/>
    <property type="project" value="UniProtKB-UniRule"/>
</dbReference>
<dbReference type="HAMAP" id="MF_00454">
    <property type="entry name" value="FluC"/>
    <property type="match status" value="1"/>
</dbReference>
<dbReference type="InterPro" id="IPR003691">
    <property type="entry name" value="FluC"/>
</dbReference>
<dbReference type="NCBIfam" id="NF010830">
    <property type="entry name" value="PRK14234.1"/>
    <property type="match status" value="1"/>
</dbReference>
<dbReference type="PANTHER" id="PTHR28259">
    <property type="entry name" value="FLUORIDE EXPORT PROTEIN 1-RELATED"/>
    <property type="match status" value="1"/>
</dbReference>
<dbReference type="PANTHER" id="PTHR28259:SF1">
    <property type="entry name" value="FLUORIDE EXPORT PROTEIN 1-RELATED"/>
    <property type="match status" value="1"/>
</dbReference>
<dbReference type="Pfam" id="PF02537">
    <property type="entry name" value="CRCB"/>
    <property type="match status" value="1"/>
</dbReference>
<sequence length="124" mass="13006">MIQTILAVSIAGIAGTLLRFAAGTWVSANWPRYFYAATLAVNIVGCLIIGVLYGLFLSRPEVPVEIRAGLIVGFVGGLTTFSSFSLDTLRLLESGQVPLALGYAGISVFGGLLATWAGLSLTRL</sequence>
<feature type="chain" id="PRO_0000110159" description="Fluoride-specific ion channel FluC">
    <location>
        <begin position="1"/>
        <end position="124"/>
    </location>
</feature>
<feature type="transmembrane region" description="Helical" evidence="1">
    <location>
        <begin position="5"/>
        <end position="25"/>
    </location>
</feature>
<feature type="transmembrane region" description="Helical" evidence="1">
    <location>
        <begin position="37"/>
        <end position="57"/>
    </location>
</feature>
<feature type="transmembrane region" description="Helical" evidence="1">
    <location>
        <begin position="69"/>
        <end position="89"/>
    </location>
</feature>
<feature type="transmembrane region" description="Helical" evidence="1">
    <location>
        <begin position="99"/>
        <end position="119"/>
    </location>
</feature>
<feature type="binding site" evidence="1">
    <location>
        <position position="76"/>
    </location>
    <ligand>
        <name>Na(+)</name>
        <dbReference type="ChEBI" id="CHEBI:29101"/>
        <note>structural</note>
    </ligand>
</feature>
<feature type="binding site" evidence="1">
    <location>
        <position position="79"/>
    </location>
    <ligand>
        <name>Na(+)</name>
        <dbReference type="ChEBI" id="CHEBI:29101"/>
        <note>structural</note>
    </ligand>
</feature>